<evidence type="ECO:0000250" key="1"/>
<evidence type="ECO:0000256" key="2">
    <source>
        <dbReference type="SAM" id="MobiDB-lite"/>
    </source>
</evidence>
<evidence type="ECO:0000305" key="3"/>
<evidence type="ECO:0007744" key="4">
    <source>
    </source>
</evidence>
<name>VATG2_ARATH</name>
<reference key="1">
    <citation type="submission" date="1998-05" db="EMBL/GenBank/DDBJ databases">
        <title>Cloning and expression of G subunits of vacuolar-type ATPase from plants.</title>
        <authorList>
            <person name="Rouquie D."/>
            <person name="Tournaire-Roux C."/>
            <person name="Szponarski W."/>
            <person name="Rossignol M."/>
            <person name="Doumas P."/>
        </authorList>
    </citation>
    <scope>NUCLEOTIDE SEQUENCE [MRNA]</scope>
    <source>
        <strain>cv. Columbia</strain>
        <tissue>Leaf</tissue>
    </source>
</reference>
<reference key="2">
    <citation type="journal article" date="1999" name="Nature">
        <title>Sequence and analysis of chromosome 4 of the plant Arabidopsis thaliana.</title>
        <authorList>
            <person name="Mayer K.F.X."/>
            <person name="Schueller C."/>
            <person name="Wambutt R."/>
            <person name="Murphy G."/>
            <person name="Volckaert G."/>
            <person name="Pohl T."/>
            <person name="Duesterhoeft A."/>
            <person name="Stiekema W."/>
            <person name="Entian K.-D."/>
            <person name="Terryn N."/>
            <person name="Harris B."/>
            <person name="Ansorge W."/>
            <person name="Brandt P."/>
            <person name="Grivell L.A."/>
            <person name="Rieger M."/>
            <person name="Weichselgartner M."/>
            <person name="de Simone V."/>
            <person name="Obermaier B."/>
            <person name="Mache R."/>
            <person name="Mueller M."/>
            <person name="Kreis M."/>
            <person name="Delseny M."/>
            <person name="Puigdomenech P."/>
            <person name="Watson M."/>
            <person name="Schmidtheini T."/>
            <person name="Reichert B."/>
            <person name="Portetelle D."/>
            <person name="Perez-Alonso M."/>
            <person name="Boutry M."/>
            <person name="Bancroft I."/>
            <person name="Vos P."/>
            <person name="Hoheisel J."/>
            <person name="Zimmermann W."/>
            <person name="Wedler H."/>
            <person name="Ridley P."/>
            <person name="Langham S.-A."/>
            <person name="McCullagh B."/>
            <person name="Bilham L."/>
            <person name="Robben J."/>
            <person name="van der Schueren J."/>
            <person name="Grymonprez B."/>
            <person name="Chuang Y.-J."/>
            <person name="Vandenbussche F."/>
            <person name="Braeken M."/>
            <person name="Weltjens I."/>
            <person name="Voet M."/>
            <person name="Bastiaens I."/>
            <person name="Aert R."/>
            <person name="Defoor E."/>
            <person name="Weitzenegger T."/>
            <person name="Bothe G."/>
            <person name="Ramsperger U."/>
            <person name="Hilbert H."/>
            <person name="Braun M."/>
            <person name="Holzer E."/>
            <person name="Brandt A."/>
            <person name="Peters S."/>
            <person name="van Staveren M."/>
            <person name="Dirkse W."/>
            <person name="Mooijman P."/>
            <person name="Klein Lankhorst R."/>
            <person name="Rose M."/>
            <person name="Hauf J."/>
            <person name="Koetter P."/>
            <person name="Berneiser S."/>
            <person name="Hempel S."/>
            <person name="Feldpausch M."/>
            <person name="Lamberth S."/>
            <person name="Van den Daele H."/>
            <person name="De Keyser A."/>
            <person name="Buysshaert C."/>
            <person name="Gielen J."/>
            <person name="Villarroel R."/>
            <person name="De Clercq R."/>
            <person name="van Montagu M."/>
            <person name="Rogers J."/>
            <person name="Cronin A."/>
            <person name="Quail M.A."/>
            <person name="Bray-Allen S."/>
            <person name="Clark L."/>
            <person name="Doggett J."/>
            <person name="Hall S."/>
            <person name="Kay M."/>
            <person name="Lennard N."/>
            <person name="McLay K."/>
            <person name="Mayes R."/>
            <person name="Pettett A."/>
            <person name="Rajandream M.A."/>
            <person name="Lyne M."/>
            <person name="Benes V."/>
            <person name="Rechmann S."/>
            <person name="Borkova D."/>
            <person name="Bloecker H."/>
            <person name="Scharfe M."/>
            <person name="Grimm M."/>
            <person name="Loehnert T.-H."/>
            <person name="Dose S."/>
            <person name="de Haan M."/>
            <person name="Maarse A.C."/>
            <person name="Schaefer M."/>
            <person name="Mueller-Auer S."/>
            <person name="Gabel C."/>
            <person name="Fuchs M."/>
            <person name="Fartmann B."/>
            <person name="Granderath K."/>
            <person name="Dauner D."/>
            <person name="Herzl A."/>
            <person name="Neumann S."/>
            <person name="Argiriou A."/>
            <person name="Vitale D."/>
            <person name="Liguori R."/>
            <person name="Piravandi E."/>
            <person name="Massenet O."/>
            <person name="Quigley F."/>
            <person name="Clabauld G."/>
            <person name="Muendlein A."/>
            <person name="Felber R."/>
            <person name="Schnabl S."/>
            <person name="Hiller R."/>
            <person name="Schmidt W."/>
            <person name="Lecharny A."/>
            <person name="Aubourg S."/>
            <person name="Chefdor F."/>
            <person name="Cooke R."/>
            <person name="Berger C."/>
            <person name="Monfort A."/>
            <person name="Casacuberta E."/>
            <person name="Gibbons T."/>
            <person name="Weber N."/>
            <person name="Vandenbol M."/>
            <person name="Bargues M."/>
            <person name="Terol J."/>
            <person name="Torres A."/>
            <person name="Perez-Perez A."/>
            <person name="Purnelle B."/>
            <person name="Bent E."/>
            <person name="Johnson S."/>
            <person name="Tacon D."/>
            <person name="Jesse T."/>
            <person name="Heijnen L."/>
            <person name="Schwarz S."/>
            <person name="Scholler P."/>
            <person name="Heber S."/>
            <person name="Francs P."/>
            <person name="Bielke C."/>
            <person name="Frishman D."/>
            <person name="Haase D."/>
            <person name="Lemcke K."/>
            <person name="Mewes H.-W."/>
            <person name="Stocker S."/>
            <person name="Zaccaria P."/>
            <person name="Bevan M."/>
            <person name="Wilson R.K."/>
            <person name="de la Bastide M."/>
            <person name="Habermann K."/>
            <person name="Parnell L."/>
            <person name="Dedhia N."/>
            <person name="Gnoj L."/>
            <person name="Schutz K."/>
            <person name="Huang E."/>
            <person name="Spiegel L."/>
            <person name="Sekhon M."/>
            <person name="Murray J."/>
            <person name="Sheet P."/>
            <person name="Cordes M."/>
            <person name="Abu-Threideh J."/>
            <person name="Stoneking T."/>
            <person name="Kalicki J."/>
            <person name="Graves T."/>
            <person name="Harmon G."/>
            <person name="Edwards J."/>
            <person name="Latreille P."/>
            <person name="Courtney L."/>
            <person name="Cloud J."/>
            <person name="Abbott A."/>
            <person name="Scott K."/>
            <person name="Johnson D."/>
            <person name="Minx P."/>
            <person name="Bentley D."/>
            <person name="Fulton B."/>
            <person name="Miller N."/>
            <person name="Greco T."/>
            <person name="Kemp K."/>
            <person name="Kramer J."/>
            <person name="Fulton L."/>
            <person name="Mardis E."/>
            <person name="Dante M."/>
            <person name="Pepin K."/>
            <person name="Hillier L.W."/>
            <person name="Nelson J."/>
            <person name="Spieth J."/>
            <person name="Ryan E."/>
            <person name="Andrews S."/>
            <person name="Geisel C."/>
            <person name="Layman D."/>
            <person name="Du H."/>
            <person name="Ali J."/>
            <person name="Berghoff A."/>
            <person name="Jones K."/>
            <person name="Drone K."/>
            <person name="Cotton M."/>
            <person name="Joshu C."/>
            <person name="Antonoiu B."/>
            <person name="Zidanic M."/>
            <person name="Strong C."/>
            <person name="Sun H."/>
            <person name="Lamar B."/>
            <person name="Yordan C."/>
            <person name="Ma P."/>
            <person name="Zhong J."/>
            <person name="Preston R."/>
            <person name="Vil D."/>
            <person name="Shekher M."/>
            <person name="Matero A."/>
            <person name="Shah R."/>
            <person name="Swaby I.K."/>
            <person name="O'Shaughnessy A."/>
            <person name="Rodriguez M."/>
            <person name="Hoffman J."/>
            <person name="Till S."/>
            <person name="Granat S."/>
            <person name="Shohdy N."/>
            <person name="Hasegawa A."/>
            <person name="Hameed A."/>
            <person name="Lodhi M."/>
            <person name="Johnson A."/>
            <person name="Chen E."/>
            <person name="Marra M.A."/>
            <person name="Martienssen R."/>
            <person name="McCombie W.R."/>
        </authorList>
    </citation>
    <scope>NUCLEOTIDE SEQUENCE [LARGE SCALE GENOMIC DNA]</scope>
    <source>
        <strain>cv. Columbia</strain>
    </source>
</reference>
<reference key="3">
    <citation type="journal article" date="2017" name="Plant J.">
        <title>Araport11: a complete reannotation of the Arabidopsis thaliana reference genome.</title>
        <authorList>
            <person name="Cheng C.Y."/>
            <person name="Krishnakumar V."/>
            <person name="Chan A.P."/>
            <person name="Thibaud-Nissen F."/>
            <person name="Schobel S."/>
            <person name="Town C.D."/>
        </authorList>
    </citation>
    <scope>GENOME REANNOTATION</scope>
    <source>
        <strain>cv. Columbia</strain>
    </source>
</reference>
<reference key="4">
    <citation type="journal article" date="2003" name="Science">
        <title>Empirical analysis of transcriptional activity in the Arabidopsis genome.</title>
        <authorList>
            <person name="Yamada K."/>
            <person name="Lim J."/>
            <person name="Dale J.M."/>
            <person name="Chen H."/>
            <person name="Shinn P."/>
            <person name="Palm C.J."/>
            <person name="Southwick A.M."/>
            <person name="Wu H.C."/>
            <person name="Kim C.J."/>
            <person name="Nguyen M."/>
            <person name="Pham P.K."/>
            <person name="Cheuk R.F."/>
            <person name="Karlin-Newmann G."/>
            <person name="Liu S.X."/>
            <person name="Lam B."/>
            <person name="Sakano H."/>
            <person name="Wu T."/>
            <person name="Yu G."/>
            <person name="Miranda M."/>
            <person name="Quach H.L."/>
            <person name="Tripp M."/>
            <person name="Chang C.H."/>
            <person name="Lee J.M."/>
            <person name="Toriumi M.J."/>
            <person name="Chan M.M."/>
            <person name="Tang C.C."/>
            <person name="Onodera C.S."/>
            <person name="Deng J.M."/>
            <person name="Akiyama K."/>
            <person name="Ansari Y."/>
            <person name="Arakawa T."/>
            <person name="Banh J."/>
            <person name="Banno F."/>
            <person name="Bowser L."/>
            <person name="Brooks S.Y."/>
            <person name="Carninci P."/>
            <person name="Chao Q."/>
            <person name="Choy N."/>
            <person name="Enju A."/>
            <person name="Goldsmith A.D."/>
            <person name="Gurjal M."/>
            <person name="Hansen N.F."/>
            <person name="Hayashizaki Y."/>
            <person name="Johnson-Hopson C."/>
            <person name="Hsuan V.W."/>
            <person name="Iida K."/>
            <person name="Karnes M."/>
            <person name="Khan S."/>
            <person name="Koesema E."/>
            <person name="Ishida J."/>
            <person name="Jiang P.X."/>
            <person name="Jones T."/>
            <person name="Kawai J."/>
            <person name="Kamiya A."/>
            <person name="Meyers C."/>
            <person name="Nakajima M."/>
            <person name="Narusaka M."/>
            <person name="Seki M."/>
            <person name="Sakurai T."/>
            <person name="Satou M."/>
            <person name="Tamse R."/>
            <person name="Vaysberg M."/>
            <person name="Wallender E.K."/>
            <person name="Wong C."/>
            <person name="Yamamura Y."/>
            <person name="Yuan S."/>
            <person name="Shinozaki K."/>
            <person name="Davis R.W."/>
            <person name="Theologis A."/>
            <person name="Ecker J.R."/>
        </authorList>
    </citation>
    <scope>NUCLEOTIDE SEQUENCE [LARGE SCALE MRNA]</scope>
    <source>
        <strain>cv. Columbia</strain>
    </source>
</reference>
<reference key="5">
    <citation type="journal article" date="2002" name="Trends Plant Sci.">
        <title>A simple nomenclature for a complex proton pump: VHA genes encode the vacuolar H(+)-ATPase.</title>
        <authorList>
            <person name="Sze H."/>
            <person name="Schumacher K."/>
            <person name="Mueller M.L."/>
            <person name="Padmanaban S."/>
            <person name="Taiz L."/>
        </authorList>
    </citation>
    <scope>GENE FAMILY</scope>
    <scope>NOMENCLATURE</scope>
</reference>
<reference key="6">
    <citation type="journal article" date="2012" name="Mol. Cell. Proteomics">
        <title>Comparative large-scale characterisation of plant vs. mammal proteins reveals similar and idiosyncratic N-alpha acetylation features.</title>
        <authorList>
            <person name="Bienvenut W.V."/>
            <person name="Sumpton D."/>
            <person name="Martinez A."/>
            <person name="Lilla S."/>
            <person name="Espagne C."/>
            <person name="Meinnel T."/>
            <person name="Giglione C."/>
        </authorList>
    </citation>
    <scope>ACETYLATION [LARGE SCALE ANALYSIS] AT MET-1</scope>
    <scope>IDENTIFICATION BY MASS SPECTROMETRY [LARGE SCALE ANALYSIS]</scope>
</reference>
<protein>
    <recommendedName>
        <fullName>V-type proton ATPase subunit G2</fullName>
        <shortName>V-ATPase subunit G2</shortName>
    </recommendedName>
    <alternativeName>
        <fullName>Vacuolar H(+)-ATPase subunit G isoform 2</fullName>
    </alternativeName>
    <alternativeName>
        <fullName>Vacuolar proton pump subunit G2</fullName>
    </alternativeName>
</protein>
<organism>
    <name type="scientific">Arabidopsis thaliana</name>
    <name type="common">Mouse-ear cress</name>
    <dbReference type="NCBI Taxonomy" id="3702"/>
    <lineage>
        <taxon>Eukaryota</taxon>
        <taxon>Viridiplantae</taxon>
        <taxon>Streptophyta</taxon>
        <taxon>Embryophyta</taxon>
        <taxon>Tracheophyta</taxon>
        <taxon>Spermatophyta</taxon>
        <taxon>Magnoliopsida</taxon>
        <taxon>eudicotyledons</taxon>
        <taxon>Gunneridae</taxon>
        <taxon>Pentapetalae</taxon>
        <taxon>rosids</taxon>
        <taxon>malvids</taxon>
        <taxon>Brassicales</taxon>
        <taxon>Brassicaceae</taxon>
        <taxon>Camelineae</taxon>
        <taxon>Arabidopsis</taxon>
    </lineage>
</organism>
<sequence length="106" mass="11742">MESAGIQQLLAAEREAQQIVNAARTAKMTRLKQAKEEAETEVAEHKTSTEQGFQRKLEATSGDSGANVKRLEQETDAKIEQLKNEATRISKDVVDMLLKNVTTVNN</sequence>
<proteinExistence type="evidence at protein level"/>
<accession>O82629</accession>
<accession>Q9SUQ6</accession>
<keyword id="KW-0007">Acetylation</keyword>
<keyword id="KW-0375">Hydrogen ion transport</keyword>
<keyword id="KW-0406">Ion transport</keyword>
<keyword id="KW-0472">Membrane</keyword>
<keyword id="KW-1185">Reference proteome</keyword>
<keyword id="KW-0813">Transport</keyword>
<keyword id="KW-0926">Vacuole</keyword>
<comment type="function">
    <text>Catalytic subunit of the peripheral V1 complex of vacuolar ATPase (V-ATPase). V-ATPase is responsible for acidifying a variety of intracellular compartments in eukaryotic cells.</text>
</comment>
<comment type="subunit">
    <text>V-ATPase is a heteromultimeric enzyme composed of a peripheral catalytic V1 complex (components A to H) attached to an integral membrane V0 proton pore complex (components: a, c, c'', d and e).</text>
</comment>
<comment type="subcellular location">
    <subcellularLocation>
        <location evidence="1">Vacuole membrane</location>
        <topology evidence="1">Peripheral membrane protein</topology>
    </subcellularLocation>
</comment>
<comment type="similarity">
    <text evidence="3">Belongs to the V-ATPase G subunit family.</text>
</comment>
<dbReference type="EMBL" id="AJ005902">
    <property type="protein sequence ID" value="CAA06759.1"/>
    <property type="molecule type" value="mRNA"/>
</dbReference>
<dbReference type="EMBL" id="AL035394">
    <property type="protein sequence ID" value="CAA23037.1"/>
    <property type="molecule type" value="Genomic_DNA"/>
</dbReference>
<dbReference type="EMBL" id="AL161560">
    <property type="protein sequence ID" value="CAB81289.1"/>
    <property type="molecule type" value="Genomic_DNA"/>
</dbReference>
<dbReference type="EMBL" id="CP002687">
    <property type="protein sequence ID" value="AEE84797.1"/>
    <property type="molecule type" value="Genomic_DNA"/>
</dbReference>
<dbReference type="EMBL" id="BT003107">
    <property type="protein sequence ID" value="AAO24539.1"/>
    <property type="molecule type" value="mRNA"/>
</dbReference>
<dbReference type="PIR" id="T05603">
    <property type="entry name" value="T05603"/>
</dbReference>
<dbReference type="PIR" id="T51826">
    <property type="entry name" value="T51826"/>
</dbReference>
<dbReference type="RefSeq" id="NP_194102.1">
    <property type="nucleotide sequence ID" value="NM_118502.3"/>
</dbReference>
<dbReference type="SMR" id="O82629"/>
<dbReference type="BioGRID" id="13760">
    <property type="interactions" value="3"/>
</dbReference>
<dbReference type="FunCoup" id="O82629">
    <property type="interactions" value="1151"/>
</dbReference>
<dbReference type="STRING" id="3702.O82629"/>
<dbReference type="TCDB" id="3.A.2.2.5">
    <property type="family name" value="the h+- or na+-translocating f-type, v-type and a-type atpase (f-atpase) superfamily"/>
</dbReference>
<dbReference type="iPTMnet" id="O82629"/>
<dbReference type="PaxDb" id="3702-AT4G23710.1"/>
<dbReference type="ProteomicsDB" id="243224"/>
<dbReference type="EnsemblPlants" id="AT4G23710.1">
    <property type="protein sequence ID" value="AT4G23710.1"/>
    <property type="gene ID" value="AT4G23710"/>
</dbReference>
<dbReference type="GeneID" id="828471"/>
<dbReference type="Gramene" id="AT4G23710.1">
    <property type="protein sequence ID" value="AT4G23710.1"/>
    <property type="gene ID" value="AT4G23710"/>
</dbReference>
<dbReference type="KEGG" id="ath:AT4G23710"/>
<dbReference type="Araport" id="AT4G23710"/>
<dbReference type="TAIR" id="AT4G23710">
    <property type="gene designation" value="VAG2"/>
</dbReference>
<dbReference type="eggNOG" id="KOG1772">
    <property type="taxonomic scope" value="Eukaryota"/>
</dbReference>
<dbReference type="HOGENOM" id="CLU_125101_3_1_1"/>
<dbReference type="InParanoid" id="O82629"/>
<dbReference type="OMA" id="HMNYRIN"/>
<dbReference type="OrthoDB" id="250802at2759"/>
<dbReference type="PhylomeDB" id="O82629"/>
<dbReference type="PRO" id="PR:O82629"/>
<dbReference type="Proteomes" id="UP000006548">
    <property type="component" value="Chromosome 4"/>
</dbReference>
<dbReference type="ExpressionAtlas" id="O82629">
    <property type="expression patterns" value="baseline and differential"/>
</dbReference>
<dbReference type="GO" id="GO:0005829">
    <property type="term" value="C:cytosol"/>
    <property type="evidence" value="ECO:0007005"/>
    <property type="project" value="TAIR"/>
</dbReference>
<dbReference type="GO" id="GO:0005794">
    <property type="term" value="C:Golgi apparatus"/>
    <property type="evidence" value="ECO:0007005"/>
    <property type="project" value="TAIR"/>
</dbReference>
<dbReference type="GO" id="GO:0000325">
    <property type="term" value="C:plant-type vacuole"/>
    <property type="evidence" value="ECO:0007005"/>
    <property type="project" value="TAIR"/>
</dbReference>
<dbReference type="GO" id="GO:0016471">
    <property type="term" value="C:vacuolar proton-transporting V-type ATPase complex"/>
    <property type="evidence" value="ECO:0007669"/>
    <property type="project" value="InterPro"/>
</dbReference>
<dbReference type="GO" id="GO:0005773">
    <property type="term" value="C:vacuole"/>
    <property type="evidence" value="ECO:0007005"/>
    <property type="project" value="TAIR"/>
</dbReference>
<dbReference type="GO" id="GO:0046961">
    <property type="term" value="F:proton-transporting ATPase activity, rotational mechanism"/>
    <property type="evidence" value="ECO:0007669"/>
    <property type="project" value="InterPro"/>
</dbReference>
<dbReference type="FunFam" id="1.20.5.2950:FF:000001">
    <property type="entry name" value="V-type proton ATPase subunit G"/>
    <property type="match status" value="1"/>
</dbReference>
<dbReference type="Gene3D" id="1.20.5.2950">
    <property type="match status" value="1"/>
</dbReference>
<dbReference type="InterPro" id="IPR005124">
    <property type="entry name" value="V-ATPase_G"/>
</dbReference>
<dbReference type="NCBIfam" id="TIGR01147">
    <property type="entry name" value="V_ATP_synt_G"/>
    <property type="match status" value="1"/>
</dbReference>
<dbReference type="PANTHER" id="PTHR12713:SF26">
    <property type="entry name" value="V-TYPE PROTON ATPASE SUBUNIT G2"/>
    <property type="match status" value="1"/>
</dbReference>
<dbReference type="PANTHER" id="PTHR12713">
    <property type="entry name" value="VACUOLAR ATP SYNTHASE SUBUNIT G"/>
    <property type="match status" value="1"/>
</dbReference>
<dbReference type="Pfam" id="PF03179">
    <property type="entry name" value="V-ATPase_G"/>
    <property type="match status" value="1"/>
</dbReference>
<feature type="chain" id="PRO_0000192909" description="V-type proton ATPase subunit G2">
    <location>
        <begin position="1"/>
        <end position="106"/>
    </location>
</feature>
<feature type="region of interest" description="Disordered" evidence="2">
    <location>
        <begin position="31"/>
        <end position="67"/>
    </location>
</feature>
<feature type="compositionally biased region" description="Basic and acidic residues" evidence="2">
    <location>
        <begin position="33"/>
        <end position="58"/>
    </location>
</feature>
<feature type="modified residue" description="N-acetylmethionine" evidence="4">
    <location>
        <position position="1"/>
    </location>
</feature>
<feature type="sequence conflict" description="In Ref. 1; CAA06759." evidence="3" ref="1">
    <original>E</original>
    <variation>K</variation>
    <location>
        <position position="15"/>
    </location>
</feature>
<gene>
    <name type="primary">VHA-G2</name>
    <name type="synonym">VAG2</name>
    <name type="synonym">VATG2</name>
    <name type="ordered locus">At4g23710</name>
    <name type="ORF">F9D16.180</name>
</gene>